<reference key="1">
    <citation type="submission" date="2009-07" db="EMBL/GenBank/DDBJ databases">
        <title>Complete sequence of Pectobacterium carotovorum subsp. carotovorum PC1.</title>
        <authorList>
            <consortium name="US DOE Joint Genome Institute"/>
            <person name="Lucas S."/>
            <person name="Copeland A."/>
            <person name="Lapidus A."/>
            <person name="Glavina del Rio T."/>
            <person name="Tice H."/>
            <person name="Bruce D."/>
            <person name="Goodwin L."/>
            <person name="Pitluck S."/>
            <person name="Munk A.C."/>
            <person name="Brettin T."/>
            <person name="Detter J.C."/>
            <person name="Han C."/>
            <person name="Tapia R."/>
            <person name="Larimer F."/>
            <person name="Land M."/>
            <person name="Hauser L."/>
            <person name="Kyrpides N."/>
            <person name="Mikhailova N."/>
            <person name="Balakrishnan V."/>
            <person name="Glasner J."/>
            <person name="Perna N.T."/>
        </authorList>
    </citation>
    <scope>NUCLEOTIDE SEQUENCE [LARGE SCALE GENOMIC DNA]</scope>
    <source>
        <strain>PC1</strain>
    </source>
</reference>
<proteinExistence type="inferred from homology"/>
<dbReference type="EMBL" id="CP001657">
    <property type="protein sequence ID" value="ACT12982.1"/>
    <property type="molecule type" value="Genomic_DNA"/>
</dbReference>
<dbReference type="RefSeq" id="WP_015840176.1">
    <property type="nucleotide sequence ID" value="NC_012917.1"/>
</dbReference>
<dbReference type="SMR" id="C6DG39"/>
<dbReference type="STRING" id="561230.PC1_1941"/>
<dbReference type="KEGG" id="pct:PC1_1941"/>
<dbReference type="eggNOG" id="COG3100">
    <property type="taxonomic scope" value="Bacteria"/>
</dbReference>
<dbReference type="HOGENOM" id="CLU_155118_1_0_6"/>
<dbReference type="OrthoDB" id="7062382at2"/>
<dbReference type="Proteomes" id="UP000002736">
    <property type="component" value="Chromosome"/>
</dbReference>
<dbReference type="Gene3D" id="3.10.510.20">
    <property type="entry name" value="YcgL domain"/>
    <property type="match status" value="1"/>
</dbReference>
<dbReference type="HAMAP" id="MF_01866">
    <property type="entry name" value="UPF0745"/>
    <property type="match status" value="1"/>
</dbReference>
<dbReference type="InterPro" id="IPR038068">
    <property type="entry name" value="YcgL-like_sf"/>
</dbReference>
<dbReference type="InterPro" id="IPR027354">
    <property type="entry name" value="YcgL_dom"/>
</dbReference>
<dbReference type="PANTHER" id="PTHR38109">
    <property type="entry name" value="PROTEIN YCGL"/>
    <property type="match status" value="1"/>
</dbReference>
<dbReference type="PANTHER" id="PTHR38109:SF1">
    <property type="entry name" value="PROTEIN YCGL"/>
    <property type="match status" value="1"/>
</dbReference>
<dbReference type="Pfam" id="PF05166">
    <property type="entry name" value="YcgL"/>
    <property type="match status" value="1"/>
</dbReference>
<dbReference type="SUPFAM" id="SSF160191">
    <property type="entry name" value="YcgL-like"/>
    <property type="match status" value="1"/>
</dbReference>
<dbReference type="PROSITE" id="PS51648">
    <property type="entry name" value="YCGL"/>
    <property type="match status" value="1"/>
</dbReference>
<evidence type="ECO:0000255" key="1">
    <source>
        <dbReference type="HAMAP-Rule" id="MF_01866"/>
    </source>
</evidence>
<name>Y1941_PECCP</name>
<sequence length="85" mass="9846">MFCVIYRSAKRDQTYLYVEKKDDFSRVPEELMKSFGTPQLAMVLPLDERKKLANADIEKVKLALQEQGFYLQVPPPVENLLNTPV</sequence>
<feature type="chain" id="PRO_1000216162" description="YcgL domain-containing protein PC1_1941">
    <location>
        <begin position="1"/>
        <end position="85"/>
    </location>
</feature>
<feature type="domain" description="YcgL" evidence="1">
    <location>
        <begin position="1"/>
        <end position="85"/>
    </location>
</feature>
<accession>C6DG39</accession>
<organism>
    <name type="scientific">Pectobacterium carotovorum subsp. carotovorum (strain PC1)</name>
    <dbReference type="NCBI Taxonomy" id="561230"/>
    <lineage>
        <taxon>Bacteria</taxon>
        <taxon>Pseudomonadati</taxon>
        <taxon>Pseudomonadota</taxon>
        <taxon>Gammaproteobacteria</taxon>
        <taxon>Enterobacterales</taxon>
        <taxon>Pectobacteriaceae</taxon>
        <taxon>Pectobacterium</taxon>
    </lineage>
</organism>
<protein>
    <recommendedName>
        <fullName evidence="1">YcgL domain-containing protein PC1_1941</fullName>
    </recommendedName>
</protein>
<gene>
    <name type="ordered locus">PC1_1941</name>
</gene>